<comment type="function">
    <text evidence="6 7 9">Minus end-directed microtubule-dependent motor required for bipolar spindle formation (PubMed:16638812). May contribute to movement of early endocytic vesicles (PubMed:17360972). Regulates cilium formation and structure (PubMed:23807208).</text>
</comment>
<comment type="subunit">
    <text evidence="6 8">Binds NUBP1 and NUBP2 (PubMed:16638812). Interacts with PPP1R42 (PubMed:18237440).</text>
</comment>
<comment type="subcellular location">
    <subcellularLocation>
        <location evidence="6 7 9">Nucleus</location>
    </subcellularLocation>
    <subcellularLocation>
        <location evidence="6 7">Cytoplasm</location>
        <location evidence="6 7">Cytoskeleton</location>
        <location evidence="6 7">Microtubule organizing center</location>
        <location evidence="6 7">Centrosome</location>
    </subcellularLocation>
    <subcellularLocation>
        <location evidence="6 7">Cytoplasm</location>
        <location evidence="6 7">Cytoskeleton</location>
        <location evidence="6 7">Spindle</location>
    </subcellularLocation>
    <subcellularLocation>
        <location evidence="6 7">Early endosome</location>
    </subcellularLocation>
    <text evidence="6 7">Associated with nucleus during interphase, centrosomes in early and spindle in later mitosis.</text>
</comment>
<comment type="alternative products">
    <event type="alternative splicing"/>
    <isoform>
        <id>Q9QWT9-1</id>
        <name evidence="5">1</name>
        <sequence type="displayed"/>
    </isoform>
    <isoform>
        <id>Q9QWT9-2</id>
        <name evidence="6">2</name>
        <sequence type="described" ref="VSP_052526"/>
    </isoform>
    <isoform>
        <id>Q9QWT9-3</id>
        <name evidence="10">3</name>
        <sequence type="described" ref="VSP_052526 VSP_052527"/>
    </isoform>
</comment>
<comment type="tissue specificity">
    <text evidence="6 10">Highly expressed in 14 dpc embryos, spleen and NIH3T3 cells. Also expressed in testis, brain, lung, kidney and cultured astrocytes. Very low levels in skeletal muscle and heart.</text>
</comment>
<comment type="developmental stage">
    <text evidence="6">Highly expressed in hippocampus of 13 dpc embryos declining to low levels by 18 dpc and to undetectable levels in juvenile and adult hippocampus.</text>
</comment>
<comment type="disruption phenotype">
    <text evidence="6">Centrosome amplification as well as multipolar spindles. Cells overexpressing Kifc1 show a single microtubule aster and growth arrest in prometaphase.</text>
</comment>
<comment type="miscellaneous">
    <text evidence="7">Purified early endocytic vesicles bind minus end-directed Kifc1 as well as plus end-directed Kif5b. Addition of anti-Kifc1 antibodies leads to a decrease in minus end-directed vesicle motility in vitro.</text>
</comment>
<comment type="similarity">
    <text evidence="3">Belongs to the TRAFAC class myosin-kinesin ATPase superfamily. Kinesin family. NCD subfamily.</text>
</comment>
<comment type="sequence caution" evidence="15">
    <conflict type="frameshift">
        <sequence resource="EMBL-CDS" id="BAA19676"/>
    </conflict>
</comment>
<keyword id="KW-0025">Alternative splicing</keyword>
<keyword id="KW-0067">ATP-binding</keyword>
<keyword id="KW-0131">Cell cycle</keyword>
<keyword id="KW-0132">Cell division</keyword>
<keyword id="KW-0175">Coiled coil</keyword>
<keyword id="KW-0963">Cytoplasm</keyword>
<keyword id="KW-0206">Cytoskeleton</keyword>
<keyword id="KW-0903">Direct protein sequencing</keyword>
<keyword id="KW-0967">Endosome</keyword>
<keyword id="KW-0493">Microtubule</keyword>
<keyword id="KW-0498">Mitosis</keyword>
<keyword id="KW-0505">Motor protein</keyword>
<keyword id="KW-0547">Nucleotide-binding</keyword>
<keyword id="KW-0539">Nucleus</keyword>
<keyword id="KW-0597">Phosphoprotein</keyword>
<keyword id="KW-1185">Reference proteome</keyword>
<accession>Q9QWT9</accession>
<accession>O08671</accession>
<accession>O35230</accession>
<accession>Q497Y3</accession>
<accession>Q4A1N2</accession>
<accession>Q6PG90</accession>
<accession>Q8BV06</accession>
<accession>Q99L84</accession>
<accession>Q9JKZ0</accession>
<name>KIFC1_MOUSE</name>
<sequence length="674" mass="74153">MDVQAQRPPLLEVKRNVELKAALVKSSSRVPLSASRLKRGPDQMEDALEPAKKRTRVMGAVTKVDTSRPRGPLLSTVSQTQGHTAAQKGPKKTGPRGCSAIGTVLRSQKPVPAAPAQKPGTSTAPVVVGKRAGKRPAWDLKGQLCDLNEELKRYREKTQTLELENRGLREQLREVQEQATTLGTERNTLEGELASVRSRAEQDQQRLETLSARVLELEECLGTRERLLQELQGERLQLQEERSTLSTQLEEQERRFQATEAALSSSQEEVVCLRQKTEAQVTLLAEQGDRLYGLEMERRRLHNQLQELKGNIRVFCRVRPVLEGESTPSPGFLVFPPGPAGPSDPPTGLSLSRSDDRRSTLTGAPAPTVRHDFSFDRVFPPGSKQEEVFEEIAMLVQSALDGYPVCIFAYGQTGSGKTFTMEGGPRGDPQLEGLIPRAMRHLFSVAQEMSGQGWTYSFVASYVEIYNETVRDLLATGPRKGQGGECEIRRASPGSEELTVTNARYVPVSCEKEVEALLHLAHQNRAVAHTAQNKRSSRSHSVFQLQISGEHAARGLQCGAPLNLVDLAGSERLDPGLHLGPGERDRLRETQAINSSLSTLGLVIMALSNKESHVPYRNSKLTYLLQNSLGGSAKMLMFVNISPLEENVSESLNSLRFASKVNQCVIGTAQANKK</sequence>
<feature type="chain" id="PRO_0000302089" description="Kinesin-like protein KIFC1">
    <location>
        <begin position="1"/>
        <end position="674"/>
    </location>
</feature>
<feature type="domain" description="Kinesin motor" evidence="3">
    <location>
        <begin position="311"/>
        <end position="664"/>
    </location>
</feature>
<feature type="region of interest" description="Disordered" evidence="4">
    <location>
        <begin position="66"/>
        <end position="96"/>
    </location>
</feature>
<feature type="region of interest" description="Disordered" evidence="4">
    <location>
        <begin position="327"/>
        <end position="366"/>
    </location>
</feature>
<feature type="coiled-coil region" evidence="2">
    <location>
        <begin position="146"/>
        <end position="315"/>
    </location>
</feature>
<feature type="compositionally biased region" description="Polar residues" evidence="4">
    <location>
        <begin position="75"/>
        <end position="84"/>
    </location>
</feature>
<feature type="compositionally biased region" description="Pro residues" evidence="4">
    <location>
        <begin position="336"/>
        <end position="345"/>
    </location>
</feature>
<feature type="binding site" evidence="3">
    <location>
        <begin position="411"/>
        <end position="418"/>
    </location>
    <ligand>
        <name>ATP</name>
        <dbReference type="ChEBI" id="CHEBI:30616"/>
    </ligand>
</feature>
<feature type="modified residue" description="Phosphoserine" evidence="1">
    <location>
        <position position="28"/>
    </location>
</feature>
<feature type="modified residue" description="Phosphoserine" evidence="1">
    <location>
        <position position="33"/>
    </location>
</feature>
<feature type="modified residue" description="Phosphoserine" evidence="1">
    <location>
        <position position="35"/>
    </location>
</feature>
<feature type="modified residue" description="Phosphothreonine" evidence="1">
    <location>
        <position position="360"/>
    </location>
</feature>
<feature type="splice variant" id="VSP_052526" description="In isoform 2 and isoform 3." evidence="12 13">
    <location>
        <begin position="1"/>
        <end position="43"/>
    </location>
</feature>
<feature type="splice variant" id="VSP_052527" description="In isoform 3." evidence="13">
    <location>
        <begin position="203"/>
        <end position="222"/>
    </location>
</feature>
<feature type="sequence conflict" description="In Ref. 1; BAA19676, 2; AAF34646, 3; CAJ19646 and 5; AAH03753/AAH57162/AAI00329." evidence="15" ref="1 2 3 5">
    <original>I</original>
    <variation>V</variation>
    <location>
        <position position="101"/>
    </location>
</feature>
<feature type="sequence conflict" description="In Ref. 1; BAA19676, 2; AAF34646, 3; CAJ19646 and 5; AAH03753/AAH57162/AAI00329." evidence="15" ref="1 2 3 5">
    <original>V</original>
    <variation>A</variation>
    <location>
        <position position="111"/>
    </location>
</feature>
<feature type="sequence conflict" description="In Ref. 1; BAA19676, 2; AAF34646 and 3; CAJ19646." evidence="15" ref="1 2 3">
    <original>T</original>
    <variation>M</variation>
    <location>
        <position position="160"/>
    </location>
</feature>
<feature type="sequence conflict" description="In Ref. 1; BAA19676, 2; AAF34646, 3; CAJ19646 and 5; AAH03753." evidence="15" ref="1 2 3 5">
    <original>E</original>
    <variation>K</variation>
    <location>
        <position position="253"/>
    </location>
</feature>
<feature type="sequence conflict" description="In Ref. 5; AAH57162." evidence="15" ref="5">
    <original>V</original>
    <variation>L</variation>
    <location>
        <position position="271"/>
    </location>
</feature>
<feature type="sequence conflict" description="In Ref. 3; CAJ19646." evidence="15" ref="3">
    <original>F</original>
    <variation>L</variation>
    <location>
        <position position="315"/>
    </location>
</feature>
<feature type="sequence conflict" description="In Ref. 1; BAA19676, 2; AAF34646, 3; CAJ19646 and 5; AAH03753/AAI00329." evidence="15" ref="1 2 3 5">
    <original>E</original>
    <variation>A</variation>
    <location>
        <position position="323"/>
    </location>
</feature>
<feature type="sequence conflict" description="In Ref. 5; AAI00329." evidence="15" ref="5">
    <original>P</original>
    <variation>L</variation>
    <location>
        <position position="345"/>
    </location>
</feature>
<feature type="sequence conflict" description="In Ref. 7; BAC38230." evidence="15" ref="7">
    <original>E</original>
    <variation>A</variation>
    <location>
        <position position="432"/>
    </location>
</feature>
<feature type="sequence conflict" description="In Ref. 1; BAA19676." evidence="15" ref="1">
    <original>P</original>
    <variation>L</variation>
    <location>
        <position position="478"/>
    </location>
</feature>
<feature type="sequence conflict" description="In Ref. 1; BAA19676." evidence="15" ref="1">
    <original>A</original>
    <variation>V</variation>
    <location>
        <position position="503"/>
    </location>
</feature>
<feature type="sequence conflict" description="In Ref. 2; AAF34646." evidence="15" ref="2">
    <original>D</original>
    <variation>G</variation>
    <location>
        <position position="566"/>
    </location>
</feature>
<feature type="sequence conflict" description="In Ref. 7; BAC38230." evidence="15" ref="7">
    <original>H</original>
    <variation>P</variation>
    <location>
        <position position="578"/>
    </location>
</feature>
<feature type="sequence conflict" description="In Ref. 1; BAA19676." evidence="15" ref="1">
    <original>S</original>
    <variation>R</variation>
    <location>
        <position position="619"/>
    </location>
</feature>
<gene>
    <name evidence="25" type="primary">Kifc1</name>
    <name evidence="14" type="synonym">Kifc4</name>
    <name evidence="11" type="synonym">Kifc5a</name>
    <name evidence="11" type="synonym">Kifc5b</name>
</gene>
<protein>
    <recommendedName>
        <fullName>Kinesin-like protein KIFC1</fullName>
    </recommendedName>
</protein>
<organism>
    <name type="scientific">Mus musculus</name>
    <name type="common">Mouse</name>
    <dbReference type="NCBI Taxonomy" id="10090"/>
    <lineage>
        <taxon>Eukaryota</taxon>
        <taxon>Metazoa</taxon>
        <taxon>Chordata</taxon>
        <taxon>Craniata</taxon>
        <taxon>Vertebrata</taxon>
        <taxon>Euteleostomi</taxon>
        <taxon>Mammalia</taxon>
        <taxon>Eutheria</taxon>
        <taxon>Euarchontoglires</taxon>
        <taxon>Glires</taxon>
        <taxon>Rodentia</taxon>
        <taxon>Myomorpha</taxon>
        <taxon>Muroidea</taxon>
        <taxon>Muridae</taxon>
        <taxon>Murinae</taxon>
        <taxon>Mus</taxon>
        <taxon>Mus</taxon>
    </lineage>
</organism>
<evidence type="ECO:0000250" key="1">
    <source>
        <dbReference type="UniProtKB" id="Q9BW19"/>
    </source>
</evidence>
<evidence type="ECO:0000255" key="2"/>
<evidence type="ECO:0000255" key="3">
    <source>
        <dbReference type="PROSITE-ProRule" id="PRU00283"/>
    </source>
</evidence>
<evidence type="ECO:0000256" key="4">
    <source>
        <dbReference type="SAM" id="MobiDB-lite"/>
    </source>
</evidence>
<evidence type="ECO:0000269" key="5">
    <source>
    </source>
</evidence>
<evidence type="ECO:0000269" key="6">
    <source>
    </source>
</evidence>
<evidence type="ECO:0000269" key="7">
    <source>
    </source>
</evidence>
<evidence type="ECO:0000269" key="8">
    <source>
    </source>
</evidence>
<evidence type="ECO:0000269" key="9">
    <source>
    </source>
</evidence>
<evidence type="ECO:0000269" key="10">
    <source>
    </source>
</evidence>
<evidence type="ECO:0000303" key="11">
    <source>
    </source>
</evidence>
<evidence type="ECO:0000303" key="12">
    <source>
    </source>
</evidence>
<evidence type="ECO:0000303" key="13">
    <source>
    </source>
</evidence>
<evidence type="ECO:0000303" key="14">
    <source>
    </source>
</evidence>
<evidence type="ECO:0000305" key="15"/>
<evidence type="ECO:0000312" key="16">
    <source>
        <dbReference type="EMBL" id="AAC39966.1"/>
    </source>
</evidence>
<evidence type="ECO:0000312" key="17">
    <source>
        <dbReference type="EMBL" id="AAC97970.1"/>
    </source>
</evidence>
<evidence type="ECO:0000312" key="18">
    <source>
        <dbReference type="EMBL" id="AAF34646.1"/>
    </source>
</evidence>
<evidence type="ECO:0000312" key="19">
    <source>
        <dbReference type="EMBL" id="AAH03753.1"/>
    </source>
</evidence>
<evidence type="ECO:0000312" key="20">
    <source>
        <dbReference type="EMBL" id="AAH57162.1"/>
    </source>
</evidence>
<evidence type="ECO:0000312" key="21">
    <source>
        <dbReference type="EMBL" id="AAI00329.1"/>
    </source>
</evidence>
<evidence type="ECO:0000312" key="22">
    <source>
        <dbReference type="EMBL" id="BAA19676.1"/>
    </source>
</evidence>
<evidence type="ECO:0000312" key="23">
    <source>
        <dbReference type="EMBL" id="BAC38230.1"/>
    </source>
</evidence>
<evidence type="ECO:0000312" key="24">
    <source>
        <dbReference type="EMBL" id="CAJ19646.1"/>
    </source>
</evidence>
<evidence type="ECO:0000312" key="25">
    <source>
        <dbReference type="MGI" id="MGI:109596"/>
    </source>
</evidence>
<proteinExistence type="evidence at protein level"/>
<dbReference type="EMBL" id="D49544">
    <property type="protein sequence ID" value="BAA19676.1"/>
    <property type="status" value="ALT_FRAME"/>
    <property type="molecule type" value="mRNA"/>
</dbReference>
<dbReference type="EMBL" id="AF221102">
    <property type="protein sequence ID" value="AAF34646.1"/>
    <property type="molecule type" value="mRNA"/>
</dbReference>
<dbReference type="EMBL" id="AM051187">
    <property type="protein sequence ID" value="CAJ19646.1"/>
    <property type="molecule type" value="mRNA"/>
</dbReference>
<dbReference type="EMBL" id="AF110520">
    <property type="protein sequence ID" value="AAC97970.1"/>
    <property type="molecule type" value="Genomic_DNA"/>
</dbReference>
<dbReference type="EMBL" id="BC003753">
    <property type="protein sequence ID" value="AAH03753.1"/>
    <property type="molecule type" value="mRNA"/>
</dbReference>
<dbReference type="EMBL" id="BC057162">
    <property type="protein sequence ID" value="AAH57162.1"/>
    <property type="molecule type" value="mRNA"/>
</dbReference>
<dbReference type="EMBL" id="BC100328">
    <property type="protein sequence ID" value="AAI00329.1"/>
    <property type="molecule type" value="mRNA"/>
</dbReference>
<dbReference type="EMBL" id="AK081484">
    <property type="protein sequence ID" value="BAC38230.1"/>
    <property type="molecule type" value="mRNA"/>
</dbReference>
<dbReference type="EMBL" id="AF013117">
    <property type="protein sequence ID" value="AAC39966.1"/>
    <property type="molecule type" value="mRNA"/>
</dbReference>
<dbReference type="CCDS" id="CCDS57065.1">
    <molecule id="Q9QWT9-1"/>
</dbReference>
<dbReference type="RefSeq" id="NP_001182227.1">
    <molecule id="Q9QWT9-1"/>
    <property type="nucleotide sequence ID" value="NM_001195298.1"/>
</dbReference>
<dbReference type="RefSeq" id="NP_444403.2">
    <property type="nucleotide sequence ID" value="NM_053173.2"/>
</dbReference>
<dbReference type="SMR" id="Q9QWT9"/>
<dbReference type="BioGRID" id="200952">
    <property type="interactions" value="10"/>
</dbReference>
<dbReference type="BioGRID" id="224976">
    <property type="interactions" value="50"/>
</dbReference>
<dbReference type="FunCoup" id="Q9QWT9">
    <property type="interactions" value="1480"/>
</dbReference>
<dbReference type="IntAct" id="Q9QWT9">
    <property type="interactions" value="9"/>
</dbReference>
<dbReference type="STRING" id="10090.ENSMUSP00000134572"/>
<dbReference type="iPTMnet" id="Q9QWT9"/>
<dbReference type="PhosphoSitePlus" id="Q9QWT9"/>
<dbReference type="jPOST" id="Q9QWT9"/>
<dbReference type="PaxDb" id="10090-ENSMUSP00000134572"/>
<dbReference type="PeptideAtlas" id="Q9QWT9"/>
<dbReference type="ProteomicsDB" id="263541">
    <molecule id="Q9QWT9-1"/>
</dbReference>
<dbReference type="ProteomicsDB" id="263542">
    <molecule id="Q9QWT9-2"/>
</dbReference>
<dbReference type="ProteomicsDB" id="263543">
    <molecule id="Q9QWT9-3"/>
</dbReference>
<dbReference type="Pumba" id="Q9QWT9"/>
<dbReference type="DNASU" id="16580"/>
<dbReference type="Ensembl" id="ENSMUST00000173492.9">
    <molecule id="Q9QWT9-1"/>
    <property type="protein sequence ID" value="ENSMUSP00000134572.2"/>
    <property type="gene ID" value="ENSMUSG00000079553.13"/>
</dbReference>
<dbReference type="GeneID" id="100502766"/>
<dbReference type="GeneID" id="16580"/>
<dbReference type="KEGG" id="mmu:100502766"/>
<dbReference type="KEGG" id="mmu:16580"/>
<dbReference type="UCSC" id="uc008bzw.2">
    <molecule id="Q9QWT9-1"/>
    <property type="organism name" value="mouse"/>
</dbReference>
<dbReference type="AGR" id="MGI:109596"/>
<dbReference type="CTD" id="16580"/>
<dbReference type="CTD" id="3833"/>
<dbReference type="MGI" id="MGI:109596">
    <property type="gene designation" value="Kifc1"/>
</dbReference>
<dbReference type="VEuPathDB" id="HostDB:ENSMUSG00000079553"/>
<dbReference type="eggNOG" id="KOG0239">
    <property type="taxonomic scope" value="Eukaryota"/>
</dbReference>
<dbReference type="GeneTree" id="ENSGT00940000161735"/>
<dbReference type="HOGENOM" id="CLU_001485_12_4_1"/>
<dbReference type="InParanoid" id="Q9QWT9"/>
<dbReference type="OMA" id="WTYHDEA"/>
<dbReference type="OrthoDB" id="3176171at2759"/>
<dbReference type="PhylomeDB" id="Q9QWT9"/>
<dbReference type="TreeFam" id="TF105237"/>
<dbReference type="Reactome" id="R-MMU-2132295">
    <property type="pathway name" value="MHC class II antigen presentation"/>
</dbReference>
<dbReference type="Reactome" id="R-MMU-6811434">
    <property type="pathway name" value="COPI-dependent Golgi-to-ER retrograde traffic"/>
</dbReference>
<dbReference type="Reactome" id="R-MMU-983189">
    <property type="pathway name" value="Kinesins"/>
</dbReference>
<dbReference type="BioGRID-ORCS" id="100502766">
    <property type="hits" value="4 hits in 78 CRISPR screens"/>
</dbReference>
<dbReference type="BioGRID-ORCS" id="16580">
    <property type="hits" value="3 hits in 58 CRISPR screens"/>
</dbReference>
<dbReference type="ChiTaRS" id="Kifc1">
    <property type="organism name" value="mouse"/>
</dbReference>
<dbReference type="PRO" id="PR:Q9QWT9"/>
<dbReference type="Proteomes" id="UP000000589">
    <property type="component" value="Chromosome 17"/>
</dbReference>
<dbReference type="RNAct" id="Q9QWT9">
    <property type="molecule type" value="protein"/>
</dbReference>
<dbReference type="Bgee" id="ENSMUSG00000079553">
    <property type="expression patterns" value="Expressed in bone marrow and 126 other cell types or tissues"/>
</dbReference>
<dbReference type="ExpressionAtlas" id="Q9QWT9">
    <property type="expression patterns" value="baseline and differential"/>
</dbReference>
<dbReference type="GO" id="GO:0005769">
    <property type="term" value="C:early endosome"/>
    <property type="evidence" value="ECO:0007669"/>
    <property type="project" value="UniProtKB-SubCell"/>
</dbReference>
<dbReference type="GO" id="GO:0030139">
    <property type="term" value="C:endocytic vesicle"/>
    <property type="evidence" value="ECO:0000314"/>
    <property type="project" value="MGI"/>
</dbReference>
<dbReference type="GO" id="GO:0005871">
    <property type="term" value="C:kinesin complex"/>
    <property type="evidence" value="ECO:0000250"/>
    <property type="project" value="MGI"/>
</dbReference>
<dbReference type="GO" id="GO:0005874">
    <property type="term" value="C:microtubule"/>
    <property type="evidence" value="ECO:0007669"/>
    <property type="project" value="UniProtKB-KW"/>
</dbReference>
<dbReference type="GO" id="GO:0072686">
    <property type="term" value="C:mitotic spindle"/>
    <property type="evidence" value="ECO:0000314"/>
    <property type="project" value="MGI"/>
</dbReference>
<dbReference type="GO" id="GO:0005634">
    <property type="term" value="C:nucleus"/>
    <property type="evidence" value="ECO:0000314"/>
    <property type="project" value="MGI"/>
</dbReference>
<dbReference type="GO" id="GO:0031616">
    <property type="term" value="C:spindle pole centrosome"/>
    <property type="evidence" value="ECO:0000314"/>
    <property type="project" value="MGI"/>
</dbReference>
<dbReference type="GO" id="GO:0005524">
    <property type="term" value="F:ATP binding"/>
    <property type="evidence" value="ECO:0007669"/>
    <property type="project" value="UniProtKB-KW"/>
</dbReference>
<dbReference type="GO" id="GO:0008017">
    <property type="term" value="F:microtubule binding"/>
    <property type="evidence" value="ECO:0007669"/>
    <property type="project" value="InterPro"/>
</dbReference>
<dbReference type="GO" id="GO:0003777">
    <property type="term" value="F:microtubule motor activity"/>
    <property type="evidence" value="ECO:0000250"/>
    <property type="project" value="MGI"/>
</dbReference>
<dbReference type="GO" id="GO:0008569">
    <property type="term" value="F:minus-end-directed microtubule motor activity"/>
    <property type="evidence" value="ECO:0000314"/>
    <property type="project" value="MGI"/>
</dbReference>
<dbReference type="GO" id="GO:0051301">
    <property type="term" value="P:cell division"/>
    <property type="evidence" value="ECO:0007669"/>
    <property type="project" value="UniProtKB-KW"/>
</dbReference>
<dbReference type="GO" id="GO:0072382">
    <property type="term" value="P:minus-end-directed vesicle transport along microtubule"/>
    <property type="evidence" value="ECO:0000315"/>
    <property type="project" value="MGI"/>
</dbReference>
<dbReference type="GO" id="GO:0007080">
    <property type="term" value="P:mitotic metaphase chromosome alignment"/>
    <property type="evidence" value="ECO:0000250"/>
    <property type="project" value="UniProtKB"/>
</dbReference>
<dbReference type="GO" id="GO:0090307">
    <property type="term" value="P:mitotic spindle assembly"/>
    <property type="evidence" value="ECO:0000250"/>
    <property type="project" value="UniProtKB"/>
</dbReference>
<dbReference type="GO" id="GO:0010826">
    <property type="term" value="P:negative regulation of centrosome duplication"/>
    <property type="evidence" value="ECO:0000315"/>
    <property type="project" value="MGI"/>
</dbReference>
<dbReference type="GO" id="GO:0047496">
    <property type="term" value="P:vesicle transport along microtubule"/>
    <property type="evidence" value="ECO:0000316"/>
    <property type="project" value="MGI"/>
</dbReference>
<dbReference type="CDD" id="cd01366">
    <property type="entry name" value="KISc_C_terminal"/>
    <property type="match status" value="1"/>
</dbReference>
<dbReference type="FunFam" id="1.10.287.1490:FF:000008">
    <property type="entry name" value="Kinesin-like protein"/>
    <property type="match status" value="1"/>
</dbReference>
<dbReference type="FunFam" id="3.40.850.10:FF:000046">
    <property type="entry name" value="Kinesin-like protein"/>
    <property type="match status" value="1"/>
</dbReference>
<dbReference type="Gene3D" id="1.10.287.1490">
    <property type="match status" value="1"/>
</dbReference>
<dbReference type="Gene3D" id="3.40.850.10">
    <property type="entry name" value="Kinesin motor domain"/>
    <property type="match status" value="1"/>
</dbReference>
<dbReference type="InterPro" id="IPR027640">
    <property type="entry name" value="Kinesin-like_fam"/>
</dbReference>
<dbReference type="InterPro" id="IPR019821">
    <property type="entry name" value="Kinesin_motor_CS"/>
</dbReference>
<dbReference type="InterPro" id="IPR001752">
    <property type="entry name" value="Kinesin_motor_dom"/>
</dbReference>
<dbReference type="InterPro" id="IPR036961">
    <property type="entry name" value="Kinesin_motor_dom_sf"/>
</dbReference>
<dbReference type="InterPro" id="IPR027417">
    <property type="entry name" value="P-loop_NTPase"/>
</dbReference>
<dbReference type="PANTHER" id="PTHR47972">
    <property type="entry name" value="KINESIN-LIKE PROTEIN KLP-3"/>
    <property type="match status" value="1"/>
</dbReference>
<dbReference type="PANTHER" id="PTHR47972:SF45">
    <property type="entry name" value="PROTEIN CLARET SEGREGATIONAL"/>
    <property type="match status" value="1"/>
</dbReference>
<dbReference type="Pfam" id="PF00225">
    <property type="entry name" value="Kinesin"/>
    <property type="match status" value="1"/>
</dbReference>
<dbReference type="PRINTS" id="PR00380">
    <property type="entry name" value="KINESINHEAVY"/>
</dbReference>
<dbReference type="SMART" id="SM00129">
    <property type="entry name" value="KISc"/>
    <property type="match status" value="1"/>
</dbReference>
<dbReference type="SUPFAM" id="SSF52540">
    <property type="entry name" value="P-loop containing nucleoside triphosphate hydrolases"/>
    <property type="match status" value="1"/>
</dbReference>
<dbReference type="SUPFAM" id="SSF57997">
    <property type="entry name" value="Tropomyosin"/>
    <property type="match status" value="1"/>
</dbReference>
<dbReference type="PROSITE" id="PS00411">
    <property type="entry name" value="KINESIN_MOTOR_1"/>
    <property type="match status" value="1"/>
</dbReference>
<dbReference type="PROSITE" id="PS50067">
    <property type="entry name" value="KINESIN_MOTOR_2"/>
    <property type="match status" value="1"/>
</dbReference>
<reference evidence="15 22" key="1">
    <citation type="journal article" date="1997" name="Neuron">
        <title>KIFC2 is a novel neuron-specific C-terminal type kinesin superfamily motor for dendritic transport of multivesicular body-like organelles.</title>
        <authorList>
            <person name="Saito N."/>
            <person name="Okada Y."/>
            <person name="Noda Y."/>
            <person name="Kinoshita Y."/>
            <person name="Kondo S."/>
            <person name="Hirokawa N."/>
        </authorList>
    </citation>
    <scope>NUCLEOTIDE SEQUENCE [MRNA] (ISOFORM 3)</scope>
    <scope>TISSUE SPECIFICITY</scope>
    <source>
        <strain evidence="22">ICR</strain>
        <tissue evidence="22">Brain</tissue>
    </source>
</reference>
<reference evidence="15 18" key="2">
    <citation type="journal article" date="2000" name="Biol. Reprod.">
        <title>Identification of isoforms of a mitotic motor in mammalian spermatogenesis.</title>
        <authorList>
            <person name="Navolanic P.M."/>
            <person name="Sperry A.O."/>
        </authorList>
    </citation>
    <scope>NUCLEOTIDE SEQUENCE [MRNA] (ISOFORM 1)</scope>
</reference>
<reference evidence="15 24" key="3">
    <citation type="journal article" date="2006" name="J. Cell Sci.">
        <title>Motor protein KIFC5A interacts with Nubp1 and Nubp2, and is implicated in the regulation of centrosome duplication.</title>
        <authorList>
            <person name="Christodoulou A."/>
            <person name="Lederer C.W."/>
            <person name="Surrey T."/>
            <person name="Vernos I."/>
            <person name="Santama N."/>
        </authorList>
    </citation>
    <scope>NUCLEOTIDE SEQUENCE [MRNA] (ISOFORM 2)</scope>
    <scope>FUNCTION</scope>
    <scope>SUBCELLULAR LOCATION</scope>
    <scope>TISSUE SPECIFICITY</scope>
    <scope>DEVELOPMENTAL STAGE</scope>
    <scope>INTERACTION WITH NUBP1 AND NUBP2</scope>
    <scope>DISRUPTION PHENOTYPE</scope>
    <source>
        <strain evidence="24">C57BL/6 X SJL</strain>
        <tissue evidence="24">Hippocampus</tissue>
    </source>
</reference>
<reference evidence="17" key="4">
    <citation type="submission" date="1998-12" db="EMBL/GenBank/DDBJ databases">
        <title>Sequence of the mouse major histocompatibility complex class II region.</title>
        <authorList>
            <person name="Rowen L."/>
            <person name="Qin S."/>
            <person name="Madan A."/>
            <person name="Loretz C."/>
            <person name="Hall J."/>
            <person name="James R."/>
            <person name="Dors M."/>
            <person name="Shaffer T."/>
            <person name="Abbasi N."/>
            <person name="Ratcliffe A."/>
            <person name="Dickhoff R."/>
            <person name="Lasky S."/>
            <person name="Hood L."/>
        </authorList>
    </citation>
    <scope>NUCLEOTIDE SEQUENCE [GENOMIC DNA]</scope>
    <source>
        <strain evidence="17">129</strain>
    </source>
</reference>
<reference evidence="15 20" key="5">
    <citation type="journal article" date="2004" name="Genome Res.">
        <title>The status, quality, and expansion of the NIH full-length cDNA project: the Mammalian Gene Collection (MGC).</title>
        <authorList>
            <consortium name="The MGC Project Team"/>
        </authorList>
    </citation>
    <scope>NUCLEOTIDE SEQUENCE [LARGE SCALE MRNA] (ISOFORM 1)</scope>
    <source>
        <strain evidence="19">Czech II</strain>
        <strain evidence="20">NMRI</strain>
        <tissue evidence="20">Mammary gland</tissue>
        <tissue evidence="21">Thyroid</tissue>
    </source>
</reference>
<reference evidence="17" key="6">
    <citation type="submission" date="2009-01" db="UniProtKB">
        <authorList>
            <person name="Lubec G."/>
            <person name="Sunyer B."/>
            <person name="Chen W.-Q."/>
        </authorList>
    </citation>
    <scope>PROTEIN SEQUENCE OF 97-131</scope>
    <scope>IDENTIFICATION BY MASS SPECTROMETRY</scope>
    <source>
        <strain>OF1</strain>
        <tissue>Hippocampus</tissue>
    </source>
</reference>
<reference evidence="15 23" key="7">
    <citation type="journal article" date="2005" name="Science">
        <title>The transcriptional landscape of the mammalian genome.</title>
        <authorList>
            <person name="Carninci P."/>
            <person name="Kasukawa T."/>
            <person name="Katayama S."/>
            <person name="Gough J."/>
            <person name="Frith M.C."/>
            <person name="Maeda N."/>
            <person name="Oyama R."/>
            <person name="Ravasi T."/>
            <person name="Lenhard B."/>
            <person name="Wells C."/>
            <person name="Kodzius R."/>
            <person name="Shimokawa K."/>
            <person name="Bajic V.B."/>
            <person name="Brenner S.E."/>
            <person name="Batalov S."/>
            <person name="Forrest A.R."/>
            <person name="Zavolan M."/>
            <person name="Davis M.J."/>
            <person name="Wilming L.G."/>
            <person name="Aidinis V."/>
            <person name="Allen J.E."/>
            <person name="Ambesi-Impiombato A."/>
            <person name="Apweiler R."/>
            <person name="Aturaliya R.N."/>
            <person name="Bailey T.L."/>
            <person name="Bansal M."/>
            <person name="Baxter L."/>
            <person name="Beisel K.W."/>
            <person name="Bersano T."/>
            <person name="Bono H."/>
            <person name="Chalk A.M."/>
            <person name="Chiu K.P."/>
            <person name="Choudhary V."/>
            <person name="Christoffels A."/>
            <person name="Clutterbuck D.R."/>
            <person name="Crowe M.L."/>
            <person name="Dalla E."/>
            <person name="Dalrymple B.P."/>
            <person name="de Bono B."/>
            <person name="Della Gatta G."/>
            <person name="di Bernardo D."/>
            <person name="Down T."/>
            <person name="Engstrom P."/>
            <person name="Fagiolini M."/>
            <person name="Faulkner G."/>
            <person name="Fletcher C.F."/>
            <person name="Fukushima T."/>
            <person name="Furuno M."/>
            <person name="Futaki S."/>
            <person name="Gariboldi M."/>
            <person name="Georgii-Hemming P."/>
            <person name="Gingeras T.R."/>
            <person name="Gojobori T."/>
            <person name="Green R.E."/>
            <person name="Gustincich S."/>
            <person name="Harbers M."/>
            <person name="Hayashi Y."/>
            <person name="Hensch T.K."/>
            <person name="Hirokawa N."/>
            <person name="Hill D."/>
            <person name="Huminiecki L."/>
            <person name="Iacono M."/>
            <person name="Ikeo K."/>
            <person name="Iwama A."/>
            <person name="Ishikawa T."/>
            <person name="Jakt M."/>
            <person name="Kanapin A."/>
            <person name="Katoh M."/>
            <person name="Kawasawa Y."/>
            <person name="Kelso J."/>
            <person name="Kitamura H."/>
            <person name="Kitano H."/>
            <person name="Kollias G."/>
            <person name="Krishnan S.P."/>
            <person name="Kruger A."/>
            <person name="Kummerfeld S.K."/>
            <person name="Kurochkin I.V."/>
            <person name="Lareau L.F."/>
            <person name="Lazarevic D."/>
            <person name="Lipovich L."/>
            <person name="Liu J."/>
            <person name="Liuni S."/>
            <person name="McWilliam S."/>
            <person name="Madan Babu M."/>
            <person name="Madera M."/>
            <person name="Marchionni L."/>
            <person name="Matsuda H."/>
            <person name="Matsuzawa S."/>
            <person name="Miki H."/>
            <person name="Mignone F."/>
            <person name="Miyake S."/>
            <person name="Morris K."/>
            <person name="Mottagui-Tabar S."/>
            <person name="Mulder N."/>
            <person name="Nakano N."/>
            <person name="Nakauchi H."/>
            <person name="Ng P."/>
            <person name="Nilsson R."/>
            <person name="Nishiguchi S."/>
            <person name="Nishikawa S."/>
            <person name="Nori F."/>
            <person name="Ohara O."/>
            <person name="Okazaki Y."/>
            <person name="Orlando V."/>
            <person name="Pang K.C."/>
            <person name="Pavan W.J."/>
            <person name="Pavesi G."/>
            <person name="Pesole G."/>
            <person name="Petrovsky N."/>
            <person name="Piazza S."/>
            <person name="Reed J."/>
            <person name="Reid J.F."/>
            <person name="Ring B.Z."/>
            <person name="Ringwald M."/>
            <person name="Rost B."/>
            <person name="Ruan Y."/>
            <person name="Salzberg S.L."/>
            <person name="Sandelin A."/>
            <person name="Schneider C."/>
            <person name="Schoenbach C."/>
            <person name="Sekiguchi K."/>
            <person name="Semple C.A."/>
            <person name="Seno S."/>
            <person name="Sessa L."/>
            <person name="Sheng Y."/>
            <person name="Shibata Y."/>
            <person name="Shimada H."/>
            <person name="Shimada K."/>
            <person name="Silva D."/>
            <person name="Sinclair B."/>
            <person name="Sperling S."/>
            <person name="Stupka E."/>
            <person name="Sugiura K."/>
            <person name="Sultana R."/>
            <person name="Takenaka Y."/>
            <person name="Taki K."/>
            <person name="Tammoja K."/>
            <person name="Tan S.L."/>
            <person name="Tang S."/>
            <person name="Taylor M.S."/>
            <person name="Tegner J."/>
            <person name="Teichmann S.A."/>
            <person name="Ueda H.R."/>
            <person name="van Nimwegen E."/>
            <person name="Verardo R."/>
            <person name="Wei C.L."/>
            <person name="Yagi K."/>
            <person name="Yamanishi H."/>
            <person name="Zabarovsky E."/>
            <person name="Zhu S."/>
            <person name="Zimmer A."/>
            <person name="Hide W."/>
            <person name="Bult C."/>
            <person name="Grimmond S.M."/>
            <person name="Teasdale R.D."/>
            <person name="Liu E.T."/>
            <person name="Brusic V."/>
            <person name="Quackenbush J."/>
            <person name="Wahlestedt C."/>
            <person name="Mattick J.S."/>
            <person name="Hume D.A."/>
            <person name="Kai C."/>
            <person name="Sasaki D."/>
            <person name="Tomaru Y."/>
            <person name="Fukuda S."/>
            <person name="Kanamori-Katayama M."/>
            <person name="Suzuki M."/>
            <person name="Aoki J."/>
            <person name="Arakawa T."/>
            <person name="Iida J."/>
            <person name="Imamura K."/>
            <person name="Itoh M."/>
            <person name="Kato T."/>
            <person name="Kawaji H."/>
            <person name="Kawagashira N."/>
            <person name="Kawashima T."/>
            <person name="Kojima M."/>
            <person name="Kondo S."/>
            <person name="Konno H."/>
            <person name="Nakano K."/>
            <person name="Ninomiya N."/>
            <person name="Nishio T."/>
            <person name="Okada M."/>
            <person name="Plessy C."/>
            <person name="Shibata K."/>
            <person name="Shiraki T."/>
            <person name="Suzuki S."/>
            <person name="Tagami M."/>
            <person name="Waki K."/>
            <person name="Watahiki A."/>
            <person name="Okamura-Oho Y."/>
            <person name="Suzuki H."/>
            <person name="Kawai J."/>
            <person name="Hayashizaki Y."/>
        </authorList>
    </citation>
    <scope>NUCLEOTIDE SEQUENCE [LARGE SCALE MRNA] OF 387-674</scope>
    <source>
        <strain evidence="23">C57BL/6J</strain>
        <tissue evidence="23">Head</tissue>
    </source>
</reference>
<reference evidence="15 16" key="8">
    <citation type="journal article" date="1997" name="Genomics">
        <title>Identification, partial characterization, and genetic mapping of kinesin-like protein genes in mouse.</title>
        <authorList>
            <person name="Yang Z."/>
            <person name="Hanlon D.W."/>
            <person name="Marszalek J.R."/>
            <person name="Goldstein L.S."/>
        </authorList>
    </citation>
    <scope>NUCLEOTIDE SEQUENCE [MRNA] OF 416-570</scope>
</reference>
<reference evidence="15" key="9">
    <citation type="journal article" date="2007" name="Mol. Biol. Cell">
        <title>Kif5B and Kifc1 interact and are required for motility and fission of early endocytic vesicles in mouse liver.</title>
        <authorList>
            <person name="Nath S."/>
            <person name="Bananis E."/>
            <person name="Sarkar S."/>
            <person name="Stockert R.J."/>
            <person name="Sperry A.O."/>
            <person name="Murray J.W."/>
            <person name="Wolkoff A.W."/>
        </authorList>
    </citation>
    <scope>FUNCTION</scope>
    <scope>SUBCELLULAR LOCATION</scope>
</reference>
<reference key="10">
    <citation type="journal article" date="2008" name="BMC Cell Biol.">
        <title>Identification of a novel Leucine-rich repeat protein and candidate PP1 regulatory subunit expressed in developing spermatids.</title>
        <authorList>
            <person name="Wang R."/>
            <person name="Sperry A.O."/>
        </authorList>
    </citation>
    <scope>INTERACTION WITH PPP1R42</scope>
</reference>
<reference key="11">
    <citation type="journal article" date="2014" name="Cell. Mol. Life Sci.">
        <title>The nucleotide-binding proteins Nubp1 and Nubp2 are negative regulators of ciliogenesis.</title>
        <authorList>
            <person name="Kypri E."/>
            <person name="Christodoulou A."/>
            <person name="Maimaris G."/>
            <person name="Lethan M."/>
            <person name="Markaki M."/>
            <person name="Lysandrou C."/>
            <person name="Lederer C.W."/>
            <person name="Tavernarakis N."/>
            <person name="Geimer S."/>
            <person name="Pedersen L.B."/>
            <person name="Santama N."/>
        </authorList>
    </citation>
    <scope>FUNCTION</scope>
</reference>